<accession>Q5R4N7</accession>
<reference key="1">
    <citation type="submission" date="2004-11" db="EMBL/GenBank/DDBJ databases">
        <authorList>
            <consortium name="The German cDNA consortium"/>
        </authorList>
    </citation>
    <scope>NUCLEOTIDE SEQUENCE [LARGE SCALE MRNA]</scope>
    <source>
        <tissue>Brain cortex</tissue>
    </source>
</reference>
<sequence length="1250" mass="138304">MRRGGWRKRAENDGWETWGGYMAAKVQKLEEQFRSDAAMQKDGTSSTIFSGVAIYVNGYTDPSAEELRKLMMLHGGQYHVYYSRSKTTHIIATNLPNAKIKELKGEKVIRPEWIVESIKAGRLLSYIPYQLYTKQSSVQKGLSFNPICRPEDPLPGPSNIAKQLNNRVNHIVKKIETENEVKVNGMNSWNEEDENNDFSFVDLEQTSPGRKQNGIPHPRGSTAIFNGHTPSSNGALKTQDCLVPMVNSVASRLSPASSQEEDKAEKSSTDFRDCTLQQLQQSTRNTDALRNPHRTNSFSLSPLHSNTKINGAHHSTVQGPSSTKSTSSVSTFSKAAPSVPSKPSDCNFISNFYSHSRLHHISMWKCELTEFVNTLQRQSNGIFPGREKLKKMKTGRSALVVTDTGDMSLLNSPRHQSCIMHVDMDCFFVSVGIRNRPDLKGKPVAVTSNRGTGRAPLRPGANPQLEWQYYQNKILKGKADIPDSSLWENPDSAQADGSDSVLSRAEIASCSYEARQLGIKNGMFFGHAKQLCPNLQAVPYDFHAYKEVARTLYETLASYTHNIEAVSCDEALVDITEILAETKLTPDEFANAVRMEIKDQTKCTASVGIGSNILLARMATRKAKPDGQYHLKPEEVDDFIRGQLVTNLPGVGHSMESKLASLGIKTCGDLQYMTMAKLQKEFGPKTGQMLYRFCRGLDDRPVRTEKERKSVSAEINYGIRFTQPKEAEAFLLSLSEEIQRRLEATGMKGKRLTLKIMVRKPGAPVETAKFGGHGICDNIARTVTLDQATDNAKIIGKAMLNMFHTMKLNISDMRGVGIHVNQLVPTNLNPSTCPSRPSVQSSHFPGGSYSVRDVFQVQKAKKSTEEEHKEVFRAAVDLEISPVSRTCTFLPPFPAHLPTSPDTNKAESSGKWNGLHSPVSVQSRLNLSIEVPSPSQLDQSVLEALLPDLREQVEQVCAVQQAESHGDKKKEPVNGCNTGILPQPVGTVLLQIPEPQESNSDTGINVIALPAFSQVDPEVFAALPAELQRELKAAYDQRQRQDENSTHQQSASASVPKNPLLHLKAAVKEKKRNKKKKTIGSPKRIQSPLKNRLLNSPAKTLPGACGSPQKLIDGFLKHEGPPAEKPLEELSASTSGVPGLSSLQSDPAGCVRPPAPNLAGAVEFNDVKTLLREWITTISDPMEEDILQVVKYCTDLIEEKDLEKLDLVIKYMKRLMQQSVESVWNMAFDFILDNVQVVLQQTYGSTLKVT</sequence>
<gene>
    <name type="primary">REV1</name>
    <name type="synonym">REV1L</name>
</gene>
<protein>
    <recommendedName>
        <fullName>DNA repair protein REV1</fullName>
        <ecNumber>2.7.7.-</ecNumber>
    </recommendedName>
    <alternativeName>
        <fullName>Rev1-like terminal deoxycytidyl transferase</fullName>
    </alternativeName>
</protein>
<organism>
    <name type="scientific">Pongo abelii</name>
    <name type="common">Sumatran orangutan</name>
    <name type="synonym">Pongo pygmaeus abelii</name>
    <dbReference type="NCBI Taxonomy" id="9601"/>
    <lineage>
        <taxon>Eukaryota</taxon>
        <taxon>Metazoa</taxon>
        <taxon>Chordata</taxon>
        <taxon>Craniata</taxon>
        <taxon>Vertebrata</taxon>
        <taxon>Euteleostomi</taxon>
        <taxon>Mammalia</taxon>
        <taxon>Eutheria</taxon>
        <taxon>Euarchontoglires</taxon>
        <taxon>Primates</taxon>
        <taxon>Haplorrhini</taxon>
        <taxon>Catarrhini</taxon>
        <taxon>Hominidae</taxon>
        <taxon>Pongo</taxon>
    </lineage>
</organism>
<proteinExistence type="evidence at transcript level"/>
<dbReference type="EC" id="2.7.7.-"/>
<dbReference type="EMBL" id="CR861208">
    <property type="protein sequence ID" value="CAH93279.1"/>
    <property type="molecule type" value="mRNA"/>
</dbReference>
<dbReference type="RefSeq" id="NP_001126930.1">
    <property type="nucleotide sequence ID" value="NM_001133458.1"/>
</dbReference>
<dbReference type="BMRB" id="Q5R4N7"/>
<dbReference type="SMR" id="Q5R4N7"/>
<dbReference type="FunCoup" id="Q5R4N7">
    <property type="interactions" value="2344"/>
</dbReference>
<dbReference type="STRING" id="9601.ENSPPYP00000013486"/>
<dbReference type="GeneID" id="100173947"/>
<dbReference type="KEGG" id="pon:100173947"/>
<dbReference type="CTD" id="51455"/>
<dbReference type="eggNOG" id="KOG2093">
    <property type="taxonomic scope" value="Eukaryota"/>
</dbReference>
<dbReference type="InParanoid" id="Q5R4N7"/>
<dbReference type="OrthoDB" id="427711at2759"/>
<dbReference type="Proteomes" id="UP000001595">
    <property type="component" value="Unplaced"/>
</dbReference>
<dbReference type="GO" id="GO:0005634">
    <property type="term" value="C:nucleus"/>
    <property type="evidence" value="ECO:0007669"/>
    <property type="project" value="UniProtKB-SubCell"/>
</dbReference>
<dbReference type="GO" id="GO:0003684">
    <property type="term" value="F:damaged DNA binding"/>
    <property type="evidence" value="ECO:0007669"/>
    <property type="project" value="InterPro"/>
</dbReference>
<dbReference type="GO" id="GO:0017125">
    <property type="term" value="F:deoxycytidyl transferase activity"/>
    <property type="evidence" value="ECO:0007669"/>
    <property type="project" value="TreeGrafter"/>
</dbReference>
<dbReference type="GO" id="GO:0003887">
    <property type="term" value="F:DNA-directed DNA polymerase activity"/>
    <property type="evidence" value="ECO:0007669"/>
    <property type="project" value="InterPro"/>
</dbReference>
<dbReference type="GO" id="GO:0046872">
    <property type="term" value="F:metal ion binding"/>
    <property type="evidence" value="ECO:0007669"/>
    <property type="project" value="UniProtKB-KW"/>
</dbReference>
<dbReference type="GO" id="GO:0070987">
    <property type="term" value="P:error-free translesion synthesis"/>
    <property type="evidence" value="ECO:0007669"/>
    <property type="project" value="TreeGrafter"/>
</dbReference>
<dbReference type="GO" id="GO:0042276">
    <property type="term" value="P:error-prone translesion synthesis"/>
    <property type="evidence" value="ECO:0007669"/>
    <property type="project" value="InterPro"/>
</dbReference>
<dbReference type="CDD" id="cd17719">
    <property type="entry name" value="BRCT_Rev1"/>
    <property type="match status" value="1"/>
</dbReference>
<dbReference type="CDD" id="cd01701">
    <property type="entry name" value="PolY_Rev1"/>
    <property type="match status" value="1"/>
</dbReference>
<dbReference type="CDD" id="cd12145">
    <property type="entry name" value="Rev1_C"/>
    <property type="match status" value="1"/>
</dbReference>
<dbReference type="CDD" id="cd19318">
    <property type="entry name" value="Rev1_UBM2"/>
    <property type="match status" value="1"/>
</dbReference>
<dbReference type="FunFam" id="1.10.150.20:FF:000025">
    <property type="entry name" value="DNA repair protein REV1"/>
    <property type="match status" value="1"/>
</dbReference>
<dbReference type="FunFam" id="1.20.58.1280:FF:000001">
    <property type="entry name" value="DNA repair protein REV1"/>
    <property type="match status" value="1"/>
</dbReference>
<dbReference type="FunFam" id="3.30.1490.100:FF:000001">
    <property type="entry name" value="DNA repair protein REV1"/>
    <property type="match status" value="1"/>
</dbReference>
<dbReference type="FunFam" id="3.30.70.270:FF:000005">
    <property type="entry name" value="DNA repair protein REV1"/>
    <property type="match status" value="1"/>
</dbReference>
<dbReference type="FunFam" id="3.30.70.270:FF:000010">
    <property type="entry name" value="DNA repair protein REV1"/>
    <property type="match status" value="1"/>
</dbReference>
<dbReference type="FunFam" id="3.40.1170.60:FF:000005">
    <property type="entry name" value="DNA repair protein REV1"/>
    <property type="match status" value="1"/>
</dbReference>
<dbReference type="FunFam" id="3.40.50.10190:FF:000009">
    <property type="entry name" value="DNA repair protein REV1"/>
    <property type="match status" value="1"/>
</dbReference>
<dbReference type="Gene3D" id="3.30.70.270">
    <property type="match status" value="2"/>
</dbReference>
<dbReference type="Gene3D" id="3.40.1170.60">
    <property type="match status" value="1"/>
</dbReference>
<dbReference type="Gene3D" id="6.10.250.1490">
    <property type="match status" value="1"/>
</dbReference>
<dbReference type="Gene3D" id="6.10.250.1630">
    <property type="match status" value="1"/>
</dbReference>
<dbReference type="Gene3D" id="1.10.150.20">
    <property type="entry name" value="5' to 3' exonuclease, C-terminal subdomain"/>
    <property type="match status" value="1"/>
</dbReference>
<dbReference type="Gene3D" id="3.40.50.10190">
    <property type="entry name" value="BRCT domain"/>
    <property type="match status" value="1"/>
</dbReference>
<dbReference type="Gene3D" id="3.30.1490.100">
    <property type="entry name" value="DNA polymerase, Y-family, little finger domain"/>
    <property type="match status" value="1"/>
</dbReference>
<dbReference type="Gene3D" id="1.20.58.1280">
    <property type="entry name" value="DNA repair protein Rev1, C-terminal domain"/>
    <property type="match status" value="1"/>
</dbReference>
<dbReference type="InterPro" id="IPR001357">
    <property type="entry name" value="BRCT_dom"/>
</dbReference>
<dbReference type="InterPro" id="IPR036420">
    <property type="entry name" value="BRCT_dom_sf"/>
</dbReference>
<dbReference type="InterPro" id="IPR043502">
    <property type="entry name" value="DNA/RNA_pol_sf"/>
</dbReference>
<dbReference type="InterPro" id="IPR036775">
    <property type="entry name" value="DNA_pol_Y-fam_lit_finger_sf"/>
</dbReference>
<dbReference type="InterPro" id="IPR017961">
    <property type="entry name" value="DNA_pol_Y-fam_little_finger"/>
</dbReference>
<dbReference type="InterPro" id="IPR025527">
    <property type="entry name" value="HUWE1/Rev1_UBM"/>
</dbReference>
<dbReference type="InterPro" id="IPR053848">
    <property type="entry name" value="IMS_HHH_1"/>
</dbReference>
<dbReference type="InterPro" id="IPR012112">
    <property type="entry name" value="REV1"/>
</dbReference>
<dbReference type="InterPro" id="IPR031991">
    <property type="entry name" value="Rev1_C"/>
</dbReference>
<dbReference type="InterPro" id="IPR038401">
    <property type="entry name" value="Rev1_C_sf"/>
</dbReference>
<dbReference type="InterPro" id="IPR047346">
    <property type="entry name" value="Rev1_UBM1/2"/>
</dbReference>
<dbReference type="InterPro" id="IPR043128">
    <property type="entry name" value="Rev_trsase/Diguanyl_cyclase"/>
</dbReference>
<dbReference type="InterPro" id="IPR001126">
    <property type="entry name" value="UmuC"/>
</dbReference>
<dbReference type="PANTHER" id="PTHR45990">
    <property type="entry name" value="DNA REPAIR PROTEIN REV1"/>
    <property type="match status" value="1"/>
</dbReference>
<dbReference type="PANTHER" id="PTHR45990:SF1">
    <property type="entry name" value="DNA REPAIR PROTEIN REV1"/>
    <property type="match status" value="1"/>
</dbReference>
<dbReference type="Pfam" id="PF00533">
    <property type="entry name" value="BRCT"/>
    <property type="match status" value="1"/>
</dbReference>
<dbReference type="Pfam" id="PF00817">
    <property type="entry name" value="IMS"/>
    <property type="match status" value="2"/>
</dbReference>
<dbReference type="Pfam" id="PF11799">
    <property type="entry name" value="IMS_C"/>
    <property type="match status" value="1"/>
</dbReference>
<dbReference type="Pfam" id="PF21999">
    <property type="entry name" value="IMS_HHH_1"/>
    <property type="match status" value="1"/>
</dbReference>
<dbReference type="Pfam" id="PF16727">
    <property type="entry name" value="REV1_C"/>
    <property type="match status" value="1"/>
</dbReference>
<dbReference type="Pfam" id="PF14377">
    <property type="entry name" value="UBM"/>
    <property type="match status" value="2"/>
</dbReference>
<dbReference type="PIRSF" id="PIRSF036573">
    <property type="entry name" value="REV1"/>
    <property type="match status" value="1"/>
</dbReference>
<dbReference type="SMART" id="SM00292">
    <property type="entry name" value="BRCT"/>
    <property type="match status" value="1"/>
</dbReference>
<dbReference type="SUPFAM" id="SSF52113">
    <property type="entry name" value="BRCT domain"/>
    <property type="match status" value="1"/>
</dbReference>
<dbReference type="SUPFAM" id="SSF56672">
    <property type="entry name" value="DNA/RNA polymerases"/>
    <property type="match status" value="1"/>
</dbReference>
<dbReference type="SUPFAM" id="SSF100879">
    <property type="entry name" value="Lesion bypass DNA polymerase (Y-family), little finger domain"/>
    <property type="match status" value="1"/>
</dbReference>
<dbReference type="PROSITE" id="PS50172">
    <property type="entry name" value="BRCT"/>
    <property type="match status" value="1"/>
</dbReference>
<dbReference type="PROSITE" id="PS50173">
    <property type="entry name" value="UMUC"/>
    <property type="match status" value="1"/>
</dbReference>
<evidence type="ECO:0000250" key="1"/>
<evidence type="ECO:0000255" key="2"/>
<evidence type="ECO:0000255" key="3">
    <source>
        <dbReference type="PROSITE-ProRule" id="PRU00033"/>
    </source>
</evidence>
<evidence type="ECO:0000255" key="4">
    <source>
        <dbReference type="PROSITE-ProRule" id="PRU00216"/>
    </source>
</evidence>
<evidence type="ECO:0000256" key="5">
    <source>
        <dbReference type="SAM" id="MobiDB-lite"/>
    </source>
</evidence>
<evidence type="ECO:0000305" key="6"/>
<name>REV1_PONAB</name>
<keyword id="KW-0227">DNA damage</keyword>
<keyword id="KW-0234">DNA repair</keyword>
<keyword id="KW-0237">DNA synthesis</keyword>
<keyword id="KW-0238">DNA-binding</keyword>
<keyword id="KW-0460">Magnesium</keyword>
<keyword id="KW-0479">Metal-binding</keyword>
<keyword id="KW-0548">Nucleotidyltransferase</keyword>
<keyword id="KW-0539">Nucleus</keyword>
<keyword id="KW-1185">Reference proteome</keyword>
<keyword id="KW-0808">Transferase</keyword>
<comment type="function">
    <text evidence="1">Deoxycytidyl transferase involved in DNA repair. Transfers a dCMP residue from dCTP to the 3'-end of a DNA primer in a template-dependent reaction. May assist in the first step in the bypass of abasic lesions by the insertion of a nucleotide opposite the lesion. Required for normal induction of mutations by physical and chemical agents (By similarity).</text>
</comment>
<comment type="subunit">
    <text evidence="1">Monomer. Interacts with the DNA polymerase zeta which is composed of REV3L and MAD2L2; the interaction with MAD2L2 is direct and requires that REV3L is in its closed conformation. Interacts with POLH, POLI and POLK. Interacts with FAAP20 (By similarity).</text>
</comment>
<comment type="subcellular location">
    <subcellularLocation>
        <location evidence="1">Nucleus</location>
    </subcellularLocation>
</comment>
<comment type="domain">
    <text evidence="1">The C-terminal domain is necessary for protein interactions.</text>
</comment>
<comment type="similarity">
    <text evidence="6">Belongs to the DNA polymerase type-Y family.</text>
</comment>
<feature type="chain" id="PRO_0000284127" description="DNA repair protein REV1">
    <location>
        <begin position="1"/>
        <end position="1250"/>
    </location>
</feature>
<feature type="domain" description="BRCT" evidence="3">
    <location>
        <begin position="44"/>
        <end position="131"/>
    </location>
</feature>
<feature type="domain" description="UmuC" evidence="4">
    <location>
        <begin position="419"/>
        <end position="652"/>
    </location>
</feature>
<feature type="region of interest" description="Disordered" evidence="5">
    <location>
        <begin position="204"/>
        <end position="236"/>
    </location>
</feature>
<feature type="region of interest" description="Disordered" evidence="5">
    <location>
        <begin position="252"/>
        <end position="329"/>
    </location>
</feature>
<feature type="region of interest" description="Interaction with target DNA" evidence="1">
    <location>
        <begin position="352"/>
        <end position="362"/>
    </location>
</feature>
<feature type="region of interest" description="Interaction with target DNA" evidence="1">
    <location>
        <begin position="652"/>
        <end position="655"/>
    </location>
</feature>
<feature type="region of interest" description="Interaction with target DNA" evidence="1">
    <location>
        <begin position="708"/>
        <end position="716"/>
    </location>
</feature>
<feature type="region of interest" description="Disordered" evidence="5">
    <location>
        <begin position="1034"/>
        <end position="1101"/>
    </location>
</feature>
<feature type="region of interest" description="Disordered" evidence="5">
    <location>
        <begin position="1117"/>
        <end position="1146"/>
    </location>
</feature>
<feature type="region of interest" description="Protein interaction domain; mediates interaction with DNA polymerase zeta" evidence="1">
    <location>
        <begin position="1151"/>
        <end position="1250"/>
    </location>
</feature>
<feature type="short sequence motif" description="Nuclear localization signal" evidence="2">
    <location>
        <begin position="1071"/>
        <end position="1077"/>
    </location>
</feature>
<feature type="compositionally biased region" description="Basic and acidic residues" evidence="5">
    <location>
        <begin position="260"/>
        <end position="273"/>
    </location>
</feature>
<feature type="compositionally biased region" description="Polar residues" evidence="5">
    <location>
        <begin position="275"/>
        <end position="320"/>
    </location>
</feature>
<feature type="compositionally biased region" description="Basic and acidic residues" evidence="5">
    <location>
        <begin position="1034"/>
        <end position="1045"/>
    </location>
</feature>
<feature type="compositionally biased region" description="Polar residues" evidence="5">
    <location>
        <begin position="1046"/>
        <end position="1055"/>
    </location>
</feature>
<feature type="compositionally biased region" description="Basic residues" evidence="5">
    <location>
        <begin position="1069"/>
        <end position="1078"/>
    </location>
</feature>
<feature type="compositionally biased region" description="Basic and acidic residues" evidence="5">
    <location>
        <begin position="1117"/>
        <end position="1128"/>
    </location>
</feature>
<feature type="compositionally biased region" description="Polar residues" evidence="5">
    <location>
        <begin position="1131"/>
        <end position="1145"/>
    </location>
</feature>
<feature type="binding site" evidence="1">
    <location>
        <position position="357"/>
    </location>
    <ligand>
        <name>dCTP</name>
        <dbReference type="ChEBI" id="CHEBI:61481"/>
    </ligand>
</feature>
<feature type="binding site" evidence="1">
    <location>
        <begin position="423"/>
        <end position="427"/>
    </location>
    <ligand>
        <name>dCTP</name>
        <dbReference type="ChEBI" id="CHEBI:61481"/>
    </ligand>
</feature>
<feature type="binding site" evidence="4">
    <location>
        <position position="423"/>
    </location>
    <ligand>
        <name>Mg(2+)</name>
        <dbReference type="ChEBI" id="CHEBI:18420"/>
        <label>1</label>
    </ligand>
</feature>
<feature type="binding site" evidence="4">
    <location>
        <position position="423"/>
    </location>
    <ligand>
        <name>Mg(2+)</name>
        <dbReference type="ChEBI" id="CHEBI:18420"/>
        <label>2</label>
    </ligand>
</feature>
<feature type="binding site" evidence="1">
    <location>
        <begin position="509"/>
        <end position="515"/>
    </location>
    <ligand>
        <name>dCTP</name>
        <dbReference type="ChEBI" id="CHEBI:61481"/>
    </ligand>
</feature>
<feature type="binding site" evidence="1">
    <location>
        <position position="521"/>
    </location>
    <ligand>
        <name>dCTP</name>
        <dbReference type="ChEBI" id="CHEBI:61481"/>
    </ligand>
</feature>
<feature type="binding site" evidence="1">
    <location>
        <position position="569"/>
    </location>
    <ligand>
        <name>dCTP</name>
        <dbReference type="ChEBI" id="CHEBI:61481"/>
    </ligand>
</feature>
<feature type="binding site" evidence="4">
    <location>
        <position position="569"/>
    </location>
    <ligand>
        <name>Mg(2+)</name>
        <dbReference type="ChEBI" id="CHEBI:18420"/>
        <label>1</label>
    </ligand>
</feature>
<feature type="binding site" evidence="4">
    <location>
        <position position="570"/>
    </location>
    <ligand>
        <name>Mg(2+)</name>
        <dbReference type="ChEBI" id="CHEBI:18420"/>
        <label>1</label>
    </ligand>
</feature>
<feature type="site" description="Interaction with target DNA" evidence="1">
    <location>
        <position position="769"/>
    </location>
</feature>
<feature type="site" description="Interaction with target DNA" evidence="1">
    <location>
        <position position="782"/>
    </location>
</feature>